<organism>
    <name type="scientific">Drosophila simulans</name>
    <name type="common">Fruit fly</name>
    <dbReference type="NCBI Taxonomy" id="7240"/>
    <lineage>
        <taxon>Eukaryota</taxon>
        <taxon>Metazoa</taxon>
        <taxon>Ecdysozoa</taxon>
        <taxon>Arthropoda</taxon>
        <taxon>Hexapoda</taxon>
        <taxon>Insecta</taxon>
        <taxon>Pterygota</taxon>
        <taxon>Neoptera</taxon>
        <taxon>Endopterygota</taxon>
        <taxon>Diptera</taxon>
        <taxon>Brachycera</taxon>
        <taxon>Muscomorpha</taxon>
        <taxon>Ephydroidea</taxon>
        <taxon>Drosophilidae</taxon>
        <taxon>Drosophila</taxon>
        <taxon>Sophophora</taxon>
    </lineage>
</organism>
<evidence type="ECO:0000250" key="1"/>
<evidence type="ECO:0000250" key="2">
    <source>
        <dbReference type="UniProtKB" id="Q9V6L9"/>
    </source>
</evidence>
<evidence type="ECO:0000255" key="3"/>
<evidence type="ECO:0000255" key="4">
    <source>
        <dbReference type="PROSITE-ProRule" id="PRU00548"/>
    </source>
</evidence>
<evidence type="ECO:0000305" key="5"/>
<evidence type="ECO:0000312" key="6">
    <source>
        <dbReference type="EMBL" id="EDX06896.1"/>
    </source>
</evidence>
<comment type="function">
    <text evidence="1">Required in the presynaptic motoneuron to down-regulate the levels of wnd and restrain synaptic terminal growth at the neuromuscular junction (NMJ).</text>
</comment>
<comment type="pathway">
    <text evidence="2">Protein modification; protein ubiquitination.</text>
</comment>
<comment type="subunit">
    <text evidence="2">Component of an E3 ubiquitin ligase complex composed of hiw and Fsn.</text>
</comment>
<comment type="subcellular location">
    <subcellularLocation>
        <location evidence="2">Synapse</location>
    </subcellularLocation>
</comment>
<comment type="similarity">
    <text evidence="5">Belongs to the FBXO45/Fsn family.</text>
</comment>
<comment type="sequence caution" evidence="5">
    <conflict type="erroneous gene model prediction">
        <sequence resource="EMBL-CDS" id="EDX06896"/>
    </conflict>
</comment>
<accession>B4QE02</accession>
<sequence>MVDPVAALCNYNVLEVIFSYLELDDLSHCSQVCKSWYHFLNDENSDVWRWHCLNKLPKESLKSDLLSSVSTYKTKLRAYFHAWSPNDCSRNVYIKPNGFTLHRNPVAQSTDAARGKIGFRHGRHTWEVIWEGPLGTVAVIGISTKEAALQCHGYVALLGSDDQSWGWNLVENHLLHNGDMQGSYPLLNNAPKYQVGERIRVILDCEDNTLSFEKNYEFLGVAFRGLPDKKLYPTVSAVYGNTEVSMVYLGTPLDG</sequence>
<feature type="chain" id="PRO_0000383317" description="F-box/SPRY domain-containing protein 1">
    <location>
        <begin position="1"/>
        <end position="255"/>
    </location>
</feature>
<feature type="domain" description="F-box" evidence="3">
    <location>
        <begin position="3"/>
        <end position="51"/>
    </location>
</feature>
<feature type="domain" description="B30.2/SPRY" evidence="4">
    <location>
        <begin position="61"/>
        <end position="253"/>
    </location>
</feature>
<protein>
    <recommendedName>
        <fullName evidence="2">F-box/SPRY domain-containing protein 1</fullName>
    </recommendedName>
</protein>
<proteinExistence type="inferred from homology"/>
<gene>
    <name evidence="2" type="primary">Fsn</name>
    <name type="ORF">GD25778</name>
</gene>
<reference evidence="6" key="1">
    <citation type="journal article" date="2007" name="Nature">
        <title>Evolution of genes and genomes on the Drosophila phylogeny.</title>
        <authorList>
            <consortium name="Drosophila 12 genomes consortium"/>
        </authorList>
    </citation>
    <scope>NUCLEOTIDE SEQUENCE [LARGE SCALE GENOMIC DNA]</scope>
</reference>
<keyword id="KW-0524">Neurogenesis</keyword>
<keyword id="KW-1185">Reference proteome</keyword>
<keyword id="KW-0770">Synapse</keyword>
<keyword id="KW-0833">Ubl conjugation pathway</keyword>
<name>FBSP1_DROSI</name>
<dbReference type="EMBL" id="CM000362">
    <property type="protein sequence ID" value="EDX06896.1"/>
    <property type="status" value="ALT_SEQ"/>
    <property type="molecule type" value="Genomic_DNA"/>
</dbReference>
<dbReference type="SMR" id="B4QE02"/>
<dbReference type="STRING" id="7240.B4QE02"/>
<dbReference type="EnsemblMetazoa" id="FBtr0348082">
    <property type="protein sequence ID" value="FBpp0313051"/>
    <property type="gene ID" value="FBgn0197059"/>
</dbReference>
<dbReference type="EnsemblMetazoa" id="XM_016182163.3">
    <property type="protein sequence ID" value="XP_016027348.1"/>
    <property type="gene ID" value="LOC6734282"/>
</dbReference>
<dbReference type="GeneID" id="6734282"/>
<dbReference type="CTD" id="36460"/>
<dbReference type="OrthoDB" id="2398163at2759"/>
<dbReference type="UniPathway" id="UPA00143"/>
<dbReference type="Proteomes" id="UP000000304">
    <property type="component" value="Chromosome 2R"/>
</dbReference>
<dbReference type="Bgee" id="FBgn0197059">
    <property type="expression patterns" value="Expressed in embryo and 3 other cell types or tissues"/>
</dbReference>
<dbReference type="GO" id="GO:0005938">
    <property type="term" value="C:cell cortex"/>
    <property type="evidence" value="ECO:0007669"/>
    <property type="project" value="EnsemblMetazoa"/>
</dbReference>
<dbReference type="GO" id="GO:0031594">
    <property type="term" value="C:neuromuscular junction"/>
    <property type="evidence" value="ECO:0000250"/>
    <property type="project" value="UniProtKB"/>
</dbReference>
<dbReference type="GO" id="GO:0005634">
    <property type="term" value="C:nucleus"/>
    <property type="evidence" value="ECO:0007669"/>
    <property type="project" value="EnsemblMetazoa"/>
</dbReference>
<dbReference type="GO" id="GO:0045495">
    <property type="term" value="C:pole plasm"/>
    <property type="evidence" value="ECO:0007669"/>
    <property type="project" value="EnsemblMetazoa"/>
</dbReference>
<dbReference type="GO" id="GO:0019005">
    <property type="term" value="C:SCF ubiquitin ligase complex"/>
    <property type="evidence" value="ECO:0007669"/>
    <property type="project" value="EnsemblMetazoa"/>
</dbReference>
<dbReference type="GO" id="GO:0010629">
    <property type="term" value="P:negative regulation of gene expression"/>
    <property type="evidence" value="ECO:0007669"/>
    <property type="project" value="EnsemblMetazoa"/>
</dbReference>
<dbReference type="GO" id="GO:0045886">
    <property type="term" value="P:negative regulation of synaptic assembly at neuromuscular junction"/>
    <property type="evidence" value="ECO:0000250"/>
    <property type="project" value="UniProtKB"/>
</dbReference>
<dbReference type="GO" id="GO:0007274">
    <property type="term" value="P:neuromuscular synaptic transmission"/>
    <property type="evidence" value="ECO:0000250"/>
    <property type="project" value="UniProtKB"/>
</dbReference>
<dbReference type="GO" id="GO:0045732">
    <property type="term" value="P:positive regulation of protein catabolic process"/>
    <property type="evidence" value="ECO:0007669"/>
    <property type="project" value="EnsemblMetazoa"/>
</dbReference>
<dbReference type="GO" id="GO:0043161">
    <property type="term" value="P:proteasome-mediated ubiquitin-dependent protein catabolic process"/>
    <property type="evidence" value="ECO:0007669"/>
    <property type="project" value="TreeGrafter"/>
</dbReference>
<dbReference type="GO" id="GO:0016567">
    <property type="term" value="P:protein ubiquitination"/>
    <property type="evidence" value="ECO:0007669"/>
    <property type="project" value="UniProtKB-UniPathway"/>
</dbReference>
<dbReference type="GO" id="GO:0060386">
    <property type="term" value="P:synapse assembly involved in innervation"/>
    <property type="evidence" value="ECO:0007669"/>
    <property type="project" value="TreeGrafter"/>
</dbReference>
<dbReference type="CDD" id="cd22111">
    <property type="entry name" value="F-box_FBXO45"/>
    <property type="match status" value="1"/>
</dbReference>
<dbReference type="CDD" id="cd12907">
    <property type="entry name" value="SPRY_Fbox"/>
    <property type="match status" value="1"/>
</dbReference>
<dbReference type="FunFam" id="1.20.1280.50:FF:000140">
    <property type="entry name" value="F-box/SPRY domain-containing protein 1"/>
    <property type="match status" value="1"/>
</dbReference>
<dbReference type="FunFam" id="2.60.120.920:FF:000017">
    <property type="entry name" value="F-box/SPRY domain-containing protein 1"/>
    <property type="match status" value="1"/>
</dbReference>
<dbReference type="Gene3D" id="1.20.1280.50">
    <property type="match status" value="1"/>
</dbReference>
<dbReference type="Gene3D" id="2.60.120.920">
    <property type="match status" value="1"/>
</dbReference>
<dbReference type="InterPro" id="IPR001870">
    <property type="entry name" value="B30.2/SPRY"/>
</dbReference>
<dbReference type="InterPro" id="IPR043136">
    <property type="entry name" value="B30.2/SPRY_sf"/>
</dbReference>
<dbReference type="InterPro" id="IPR013320">
    <property type="entry name" value="ConA-like_dom_sf"/>
</dbReference>
<dbReference type="InterPro" id="IPR036047">
    <property type="entry name" value="F-box-like_dom_sf"/>
</dbReference>
<dbReference type="InterPro" id="IPR001810">
    <property type="entry name" value="F-box_dom"/>
</dbReference>
<dbReference type="InterPro" id="IPR050672">
    <property type="entry name" value="FBXO45-Fsn/SPSB_families"/>
</dbReference>
<dbReference type="InterPro" id="IPR003877">
    <property type="entry name" value="SPRY_dom"/>
</dbReference>
<dbReference type="InterPro" id="IPR035784">
    <property type="entry name" value="SPRY_FBXO45"/>
</dbReference>
<dbReference type="PANTHER" id="PTHR12245:SF7">
    <property type="entry name" value="F-BOX_SPRY DOMAIN-CONTAINING PROTEIN 1"/>
    <property type="match status" value="1"/>
</dbReference>
<dbReference type="PANTHER" id="PTHR12245">
    <property type="entry name" value="SPRY DOMAIN CONTAINING SOCS BOX PROTEIN"/>
    <property type="match status" value="1"/>
</dbReference>
<dbReference type="Pfam" id="PF12937">
    <property type="entry name" value="F-box-like"/>
    <property type="match status" value="1"/>
</dbReference>
<dbReference type="Pfam" id="PF00622">
    <property type="entry name" value="SPRY"/>
    <property type="match status" value="1"/>
</dbReference>
<dbReference type="SMART" id="SM00449">
    <property type="entry name" value="SPRY"/>
    <property type="match status" value="1"/>
</dbReference>
<dbReference type="SUPFAM" id="SSF49899">
    <property type="entry name" value="Concanavalin A-like lectins/glucanases"/>
    <property type="match status" value="1"/>
</dbReference>
<dbReference type="SUPFAM" id="SSF81383">
    <property type="entry name" value="F-box domain"/>
    <property type="match status" value="1"/>
</dbReference>
<dbReference type="PROSITE" id="PS50188">
    <property type="entry name" value="B302_SPRY"/>
    <property type="match status" value="1"/>
</dbReference>